<organism>
    <name type="scientific">Mus musculus</name>
    <name type="common">Mouse</name>
    <dbReference type="NCBI Taxonomy" id="10090"/>
    <lineage>
        <taxon>Eukaryota</taxon>
        <taxon>Metazoa</taxon>
        <taxon>Chordata</taxon>
        <taxon>Craniata</taxon>
        <taxon>Vertebrata</taxon>
        <taxon>Euteleostomi</taxon>
        <taxon>Mammalia</taxon>
        <taxon>Eutheria</taxon>
        <taxon>Euarchontoglires</taxon>
        <taxon>Glires</taxon>
        <taxon>Rodentia</taxon>
        <taxon>Myomorpha</taxon>
        <taxon>Muroidea</taxon>
        <taxon>Muridae</taxon>
        <taxon>Murinae</taxon>
        <taxon>Mus</taxon>
        <taxon>Mus</taxon>
    </lineage>
</organism>
<keyword id="KW-0025">Alternative splicing</keyword>
<keyword id="KW-0158">Chromosome</keyword>
<keyword id="KW-0175">Coiled coil</keyword>
<keyword id="KW-0963">Cytoplasm</keyword>
<keyword id="KW-0227">DNA damage</keyword>
<keyword id="KW-0233">DNA recombination</keyword>
<keyword id="KW-0234">DNA repair</keyword>
<keyword id="KW-0238">DNA-binding</keyword>
<keyword id="KW-1017">Isopeptide bond</keyword>
<keyword id="KW-0539">Nucleus</keyword>
<keyword id="KW-0597">Phosphoprotein</keyword>
<keyword id="KW-1185">Reference proteome</keyword>
<keyword id="KW-0832">Ubl conjugation</keyword>
<comment type="function">
    <molecule>DNA repair protein XRCC4</molecule>
    <text evidence="1 6">DNA non-homologous end joining (NHEJ) core factor, required for double-strand break repair and V(D)J recombination (PubMed:9875844). Acts as a scaffold protein that regulates recruitment of other proteins to DNA double-strand breaks (DSBs). Associates with NHEJ1/XLF to form alternating helical filaments that bridge DNA and act like a bandage, holding together the broken DNA until it is repaired. The XRCC4-NHEJ1/XLF subcomplex binds to the DNA fragments of a DSB in a highly diffusive manner and robustly bridges two independent DNA molecules, holding the broken DNA fragments in close proximity to one other. The mobility of the bridges ensures that the ends remain accessible for further processing by other repair factors. Plays a key role in the NHEJ ligation step of the broken DNA during DSB repair via direct interaction with DNA ligase IV (LIG4): the LIG4-XRCC4 subcomplex reseals the DNA breaks after the gap filling is completed. XRCC4 stabilizes LIG4, regulates its subcellular localization and enhances LIG4's joining activity. Binding of the LIG4-XRCC4 subcomplex to DNA ends is dependent on the assembly of the DNA-dependent protein kinase complex DNA-PK to these DNA ends. Promotes displacement of PNKP from processed strand break termini (By similarity).</text>
</comment>
<comment type="function">
    <molecule>Protein XRCC4, C-terminus</molecule>
    <text evidence="5">Acts as an activator of the phospholipid scramblase activity of XKR4 (PubMed:33725486). This form, which is generated upon caspase-3 (CASP3) cleavage, translocates into the cytoplasm and interacts with XKR4, thereby promoting phosphatidylserine scramblase activity of XKR4 and leading to phosphatidylserine exposure on apoptotic cell surface (PubMed:33725486).</text>
</comment>
<comment type="subunit">
    <molecule>DNA repair protein XRCC4</molecule>
    <text evidence="1">Homodimer and homotetramer in solution. Interacts with NHEJ1/XLF; the interaction is direct and is mediated via a head-to-head interaction between N-terminal head regions. Interacts with LIG4; the LIG4-XRCC4 subcomplex has a 1:2 stoichiometry and XRCC4 is required for LIG4 stability. Component of the core long-range non-homologous end joining (NHEJ) complex (also named DNA-PK complex) composed of PRKDC, LIG4, XRCC4, XRCC6/Ku70, XRCC5/Ku86 and NHEJ1/XLF. Additional component of the NHEJ complex includes PAXX. Following autophosphorylation, PRKDC dissociates from DNA, leading to formation of the short-range NHEJ complex, composed of LIG4, XRCC4, XRCC6/Ku70, XRCC5/Ku86 and NHEJ1/XLF. Interacts with PRKDC; the interaction is direct. Interacts with XRCC6/Ku70; the interaction is direct. Interacts with APTX and APLF. Forms a heterotetramer with IFFO1; the interaction involves LIG4-free XRCC4 and leads to the relocalization of IFFO1 to the sites of DNA damage. Interacts with PNKP; mainly interacts with PNKP when phosphorylated at Thr-231, but is also able to interact at much lower level with PNKP when not unphosphorylated. Interacts with POLL (DNA polymerase lambda).</text>
</comment>
<comment type="subunit">
    <molecule>Protein XRCC4, C-terminus</molecule>
    <text evidence="1">Interacts with XKR4; interacts with the processed form of XKR4, which is cleaved by caspase.</text>
</comment>
<comment type="subcellular location">
    <subcellularLocation>
        <location evidence="1">Nucleus</location>
    </subcellularLocation>
    <subcellularLocation>
        <location evidence="1">Chromosome</location>
    </subcellularLocation>
    <text evidence="1">Localizes to site of double-strand breaks.</text>
</comment>
<comment type="subcellular location">
    <molecule>Protein XRCC4, C-terminus</molecule>
    <subcellularLocation>
        <location evidence="1">Cytoplasm</location>
    </subcellularLocation>
    <text evidence="1">Translocates from the nucleus to the cytoplasm following cleavage by caspase-3 (CASP3).</text>
</comment>
<comment type="alternative products">
    <event type="alternative splicing"/>
    <isoform>
        <id>Q924T3-1</id>
        <name>1</name>
        <sequence type="displayed"/>
    </isoform>
    <isoform>
        <id>Q924T3-2</id>
        <name>2</name>
        <sequence type="described" ref="VSP_009475"/>
    </isoform>
</comment>
<comment type="PTM">
    <text evidence="1 4">Phosphorylated by PRKDC at the C-terminus in response to DNA damage; Ser-254 and Ser-312 constitute the main phosphorylation sites (PubMed:14599745). Phosphorylation by PRKDC at the C-terminus of XRCC4 and NHEJ1/XLF are highly redundant and regulate ability of the XRCC4-NHEJ1/XLF subcomplex to bridge DNA (By similarity). Phosphorylation by PRKDC does not prevent interaction with NHEJ1/XLF but disrupts ability to bridge DNA and promotes detachment from DNA (By similarity). Phosphorylation at Ser-319 and Ser-320 by PRKDC promotes recognition by the SCF(FBXW7) complex and subsequent ubiquitination via 'Lys-63'-linked ubiquitin (By similarity). Phosphorylation at Thr-231 by CK2 promotes interaction with PNKP; regulating PNKP activity and localization to DNA damage sites (By similarity). Phosphorylation by CK2 promotes interaction with APTX (By similarity).</text>
</comment>
<comment type="PTM">
    <text evidence="1">Ubiquitinated at Lys-290 by the SCF(FBXW7) complex via 'Lys-63'-linked ubiquitination, thereby promoting double-strand break repair: the SCF(FBXW7) complex specifically recognizes XRCC4 when phosphorylated at Ser-319 and Ser-320 by PRKDC, and 'Lys-63'-linked ubiquitination facilitates DNA non-homologous end joining (NHEJ) by enhancing association with XRCC5/Ku80 and XRCC6/Ku70. Monoubiquitinated.</text>
</comment>
<comment type="PTM">
    <molecule>DNA repair protein XRCC4</molecule>
    <text evidence="1">Undergoes proteolytic processing by caspase-3 (CASP3). This generates the protein XRCC4, C-terminus (XRCC4/C), which translocates to the cytoplasm and activates phospholipid scramblase activity of XKR4, thereby promoting phosphatidylserine exposure on apoptotic cell surface.</text>
</comment>
<comment type="disruption phenotype">
    <text evidence="6">Mice show growth defects, premature senescence, IR sensitivity, and inability to support V(D)J recombination (PubMed:9875844). XRCC4 deficiency causes late embryonic lethality accompanied by defective lymphogenesis and defective neurogenesis manifested by extensive apoptotic death of newly generated postmitotic neuronal cells (PubMed:9875844).</text>
</comment>
<comment type="similarity">
    <text evidence="10">Belongs to the XRCC4-XLF family. XRCC4 subfamily.</text>
</comment>
<sequence length="326" mass="37061">MERKVSRIYLASEPNVPYFLQVSWERAIGSGFVITLTDGHSAWTATVSELEISQEADDMAMEKGKYIDELRKALVPGSGAAGTYKFLFSKESQHFSLEKELKDVSFRLGSFNLDKVSNSAEVIRELICYCLDTITEKQAKNEHLQKENERLLRDWNDVQGRFEKCVSAKEALEADLYQRFILVLNEKKTKIRSLHKLLNEVQQLEESTKPERENPCSDKTPEEHGLYDGSTDEESGAPVQAAETLHKDDSIFSSPDVTDIAPSRKRRHRMQKNLGTEPKMAPQELPLQEKERLASSLPQTLKEESTSAENMSLETLRNSSPEDLFD</sequence>
<dbReference type="EMBL" id="AB055154">
    <property type="protein sequence ID" value="BAB62316.1"/>
    <property type="molecule type" value="mRNA"/>
</dbReference>
<dbReference type="EMBL" id="AK009951">
    <property type="protein sequence ID" value="BAB26604.1"/>
    <property type="molecule type" value="mRNA"/>
</dbReference>
<dbReference type="EMBL" id="AK053612">
    <property type="protein sequence ID" value="BAC35447.1"/>
    <property type="molecule type" value="mRNA"/>
</dbReference>
<dbReference type="EMBL" id="AK088281">
    <property type="protein sequence ID" value="BAC40256.1"/>
    <property type="molecule type" value="mRNA"/>
</dbReference>
<dbReference type="EMBL" id="BC025538">
    <property type="protein sequence ID" value="AAH25538.1"/>
    <property type="molecule type" value="mRNA"/>
</dbReference>
<dbReference type="CCDS" id="CCDS26673.1">
    <molecule id="Q924T3-1"/>
</dbReference>
<dbReference type="RefSeq" id="NP_082288.1">
    <property type="nucleotide sequence ID" value="NM_028012.4"/>
</dbReference>
<dbReference type="RefSeq" id="XP_006517104.1">
    <property type="nucleotide sequence ID" value="XM_006517041.3"/>
</dbReference>
<dbReference type="RefSeq" id="XP_006517105.1">
    <property type="nucleotide sequence ID" value="XM_006517042.2"/>
</dbReference>
<dbReference type="RefSeq" id="XP_006517106.1">
    <property type="nucleotide sequence ID" value="XM_006517043.3"/>
</dbReference>
<dbReference type="SMR" id="Q924T3"/>
<dbReference type="CORUM" id="Q924T3"/>
<dbReference type="ELM" id="Q924T3"/>
<dbReference type="FunCoup" id="Q924T3">
    <property type="interactions" value="1395"/>
</dbReference>
<dbReference type="STRING" id="10090.ENSMUSP00000022115"/>
<dbReference type="GlyGen" id="Q924T3">
    <property type="glycosylation" value="1 site, 1 N-linked glycan (1 site)"/>
</dbReference>
<dbReference type="iPTMnet" id="Q924T3"/>
<dbReference type="PhosphoSitePlus" id="Q924T3"/>
<dbReference type="jPOST" id="Q924T3"/>
<dbReference type="PaxDb" id="10090-ENSMUSP00000022115"/>
<dbReference type="PeptideAtlas" id="Q924T3"/>
<dbReference type="ProteomicsDB" id="297570">
    <molecule id="Q924T3-1"/>
</dbReference>
<dbReference type="ProteomicsDB" id="297571">
    <molecule id="Q924T3-2"/>
</dbReference>
<dbReference type="Pumba" id="Q924T3"/>
<dbReference type="DNASU" id="108138"/>
<dbReference type="GeneID" id="108138"/>
<dbReference type="KEGG" id="mmu:108138"/>
<dbReference type="UCSC" id="uc007rjn.2">
    <molecule id="Q924T3-1"/>
    <property type="organism name" value="mouse"/>
</dbReference>
<dbReference type="AGR" id="MGI:1333799"/>
<dbReference type="CTD" id="7518"/>
<dbReference type="MGI" id="MGI:1333799">
    <property type="gene designation" value="Xrcc4"/>
</dbReference>
<dbReference type="eggNOG" id="ENOG502QWJA">
    <property type="taxonomic scope" value="Eukaryota"/>
</dbReference>
<dbReference type="InParanoid" id="Q924T3"/>
<dbReference type="OrthoDB" id="8064436at2759"/>
<dbReference type="PhylomeDB" id="Q924T3"/>
<dbReference type="TreeFam" id="TF101204"/>
<dbReference type="Reactome" id="R-MMU-3108214">
    <property type="pathway name" value="SUMOylation of DNA damage response and repair proteins"/>
</dbReference>
<dbReference type="Reactome" id="R-MMU-5693571">
    <property type="pathway name" value="Nonhomologous End-Joining (NHEJ)"/>
</dbReference>
<dbReference type="BioGRID-ORCS" id="108138">
    <property type="hits" value="7 hits in 118 CRISPR screens"/>
</dbReference>
<dbReference type="ChiTaRS" id="Xrcc4">
    <property type="organism name" value="mouse"/>
</dbReference>
<dbReference type="PRO" id="PR:Q924T3"/>
<dbReference type="Proteomes" id="UP000000589">
    <property type="component" value="Unplaced"/>
</dbReference>
<dbReference type="RNAct" id="Q924T3">
    <property type="molecule type" value="protein"/>
</dbReference>
<dbReference type="GO" id="GO:0000781">
    <property type="term" value="C:chromosome, telomeric region"/>
    <property type="evidence" value="ECO:0000314"/>
    <property type="project" value="BHF-UCL"/>
</dbReference>
<dbReference type="GO" id="GO:0005737">
    <property type="term" value="C:cytoplasm"/>
    <property type="evidence" value="ECO:0007669"/>
    <property type="project" value="UniProtKB-SubCell"/>
</dbReference>
<dbReference type="GO" id="GO:0005958">
    <property type="term" value="C:DNA-dependent protein kinase-DNA ligase 4 complex"/>
    <property type="evidence" value="ECO:0000314"/>
    <property type="project" value="MGI"/>
</dbReference>
<dbReference type="GO" id="GO:0070522">
    <property type="term" value="C:ERCC4-ERCC1 complex"/>
    <property type="evidence" value="ECO:0000314"/>
    <property type="project" value="BHF-UCL"/>
</dbReference>
<dbReference type="GO" id="GO:0070419">
    <property type="term" value="C:nonhomologous end joining complex"/>
    <property type="evidence" value="ECO:0000250"/>
    <property type="project" value="UniProtKB"/>
</dbReference>
<dbReference type="GO" id="GO:0035861">
    <property type="term" value="C:site of double-strand break"/>
    <property type="evidence" value="ECO:0000250"/>
    <property type="project" value="UniProtKB"/>
</dbReference>
<dbReference type="GO" id="GO:0003677">
    <property type="term" value="F:DNA binding"/>
    <property type="evidence" value="ECO:0007669"/>
    <property type="project" value="UniProtKB-KW"/>
</dbReference>
<dbReference type="GO" id="GO:0007417">
    <property type="term" value="P:central nervous system development"/>
    <property type="evidence" value="ECO:0000315"/>
    <property type="project" value="MGI"/>
</dbReference>
<dbReference type="GO" id="GO:1904155">
    <property type="term" value="P:DN2 thymocyte differentiation"/>
    <property type="evidence" value="ECO:0000315"/>
    <property type="project" value="MGI"/>
</dbReference>
<dbReference type="GO" id="GO:0006302">
    <property type="term" value="P:double-strand break repair"/>
    <property type="evidence" value="ECO:0000315"/>
    <property type="project" value="MGI"/>
</dbReference>
<dbReference type="GO" id="GO:0006303">
    <property type="term" value="P:double-strand break repair via nonhomologous end joining"/>
    <property type="evidence" value="ECO:0000315"/>
    <property type="project" value="BHF-UCL"/>
</dbReference>
<dbReference type="GO" id="GO:0048144">
    <property type="term" value="P:fibroblast proliferation"/>
    <property type="evidence" value="ECO:0000315"/>
    <property type="project" value="MGI"/>
</dbReference>
<dbReference type="GO" id="GO:0033152">
    <property type="term" value="P:immunoglobulin V(D)J recombination"/>
    <property type="evidence" value="ECO:0000315"/>
    <property type="project" value="MGI"/>
</dbReference>
<dbReference type="GO" id="GO:0001701">
    <property type="term" value="P:in utero embryonic development"/>
    <property type="evidence" value="ECO:0000315"/>
    <property type="project" value="MGI"/>
</dbReference>
<dbReference type="GO" id="GO:0045190">
    <property type="term" value="P:isotype switching"/>
    <property type="evidence" value="ECO:0000315"/>
    <property type="project" value="MGI"/>
</dbReference>
<dbReference type="GO" id="GO:0043524">
    <property type="term" value="P:negative regulation of neuron apoptotic process"/>
    <property type="evidence" value="ECO:0000315"/>
    <property type="project" value="MGI"/>
</dbReference>
<dbReference type="GO" id="GO:1905765">
    <property type="term" value="P:negative regulation of protection from non-homologous end joining at telomere"/>
    <property type="evidence" value="ECO:0000315"/>
    <property type="project" value="BHF-UCL"/>
</dbReference>
<dbReference type="GO" id="GO:0022008">
    <property type="term" value="P:neurogenesis"/>
    <property type="evidence" value="ECO:0000315"/>
    <property type="project" value="MGI"/>
</dbReference>
<dbReference type="GO" id="GO:0051402">
    <property type="term" value="P:neuron apoptotic process"/>
    <property type="evidence" value="ECO:0000315"/>
    <property type="project" value="MGI"/>
</dbReference>
<dbReference type="GO" id="GO:0048146">
    <property type="term" value="P:positive regulation of fibroblast proliferation"/>
    <property type="evidence" value="ECO:0000315"/>
    <property type="project" value="MGI"/>
</dbReference>
<dbReference type="GO" id="GO:0050769">
    <property type="term" value="P:positive regulation of neurogenesis"/>
    <property type="evidence" value="ECO:0000315"/>
    <property type="project" value="MGI"/>
</dbReference>
<dbReference type="GO" id="GO:0002328">
    <property type="term" value="P:pro-B cell differentiation"/>
    <property type="evidence" value="ECO:0000315"/>
    <property type="project" value="MGI"/>
</dbReference>
<dbReference type="GO" id="GO:1990166">
    <property type="term" value="P:protein localization to site of double-strand break"/>
    <property type="evidence" value="ECO:0000250"/>
    <property type="project" value="UniProtKB"/>
</dbReference>
<dbReference type="GO" id="GO:0010332">
    <property type="term" value="P:response to gamma radiation"/>
    <property type="evidence" value="ECO:0000315"/>
    <property type="project" value="MGI"/>
</dbReference>
<dbReference type="GO" id="GO:0010212">
    <property type="term" value="P:response to ionizing radiation"/>
    <property type="evidence" value="ECO:0000315"/>
    <property type="project" value="MGI"/>
</dbReference>
<dbReference type="GO" id="GO:0010165">
    <property type="term" value="P:response to X-ray"/>
    <property type="evidence" value="ECO:0000315"/>
    <property type="project" value="MGI"/>
</dbReference>
<dbReference type="GO" id="GO:0061819">
    <property type="term" value="P:telomeric DNA-containing double minutes formation"/>
    <property type="evidence" value="ECO:0000315"/>
    <property type="project" value="BHF-UCL"/>
</dbReference>
<dbReference type="GO" id="GO:0033151">
    <property type="term" value="P:V(D)J recombination"/>
    <property type="evidence" value="ECO:0000314"/>
    <property type="project" value="MGI"/>
</dbReference>
<dbReference type="CDD" id="cd22283">
    <property type="entry name" value="HD_XRCC4_N"/>
    <property type="match status" value="1"/>
</dbReference>
<dbReference type="FunFam" id="2.170.210.10:FF:000002">
    <property type="entry name" value="DNA repair protein XRCC4"/>
    <property type="match status" value="1"/>
</dbReference>
<dbReference type="FunFam" id="1.20.5.370:FF:000011">
    <property type="entry name" value="DNA repair protein XRCC4 isoform X2"/>
    <property type="match status" value="1"/>
</dbReference>
<dbReference type="Gene3D" id="1.20.5.370">
    <property type="match status" value="1"/>
</dbReference>
<dbReference type="Gene3D" id="2.170.210.10">
    <property type="entry name" value="DNA double-strand break repair and VJ recombination XRCC4, N-terminal"/>
    <property type="match status" value="1"/>
</dbReference>
<dbReference type="InterPro" id="IPR010585">
    <property type="entry name" value="DNA_repair_prot_XRCC4"/>
</dbReference>
<dbReference type="InterPro" id="IPR014751">
    <property type="entry name" value="XRCC4-like_C"/>
</dbReference>
<dbReference type="InterPro" id="IPR038051">
    <property type="entry name" value="XRCC4-like_N_sf"/>
</dbReference>
<dbReference type="InterPro" id="IPR053963">
    <property type="entry name" value="XRCC4_C"/>
</dbReference>
<dbReference type="InterPro" id="IPR053962">
    <property type="entry name" value="XRCC4_CC"/>
</dbReference>
<dbReference type="InterPro" id="IPR053961">
    <property type="entry name" value="XRCC4_N"/>
</dbReference>
<dbReference type="InterPro" id="IPR009089">
    <property type="entry name" value="XRCC4_N_sf"/>
</dbReference>
<dbReference type="PANTHER" id="PTHR28559">
    <property type="entry name" value="DNA REPAIR PROTEIN XRCC4"/>
    <property type="match status" value="1"/>
</dbReference>
<dbReference type="PANTHER" id="PTHR28559:SF1">
    <property type="entry name" value="DNA REPAIR PROTEIN XRCC4"/>
    <property type="match status" value="1"/>
</dbReference>
<dbReference type="Pfam" id="PF06632">
    <property type="entry name" value="XRCC4"/>
    <property type="match status" value="1"/>
</dbReference>
<dbReference type="Pfam" id="PF21925">
    <property type="entry name" value="XRCC4_C"/>
    <property type="match status" value="1"/>
</dbReference>
<dbReference type="Pfam" id="PF21924">
    <property type="entry name" value="XRCC4_CC"/>
    <property type="match status" value="1"/>
</dbReference>
<dbReference type="SUPFAM" id="SSF58022">
    <property type="entry name" value="XRCC4, C-terminal oligomerization domain"/>
    <property type="match status" value="1"/>
</dbReference>
<dbReference type="SUPFAM" id="SSF50809">
    <property type="entry name" value="XRCC4, N-terminal domain"/>
    <property type="match status" value="1"/>
</dbReference>
<reference key="1">
    <citation type="journal article" date="2001" name="Mutat. Res.">
        <title>Molecular characterization of ionizing radiation-hypersensitive mutant M10 cells.</title>
        <authorList>
            <person name="Mori M."/>
            <person name="Itsukaichi H."/>
            <person name="Nakamura A."/>
            <person name="Sato K."/>
        </authorList>
    </citation>
    <scope>NUCLEOTIDE SEQUENCE [MRNA] (ISOFORM 1)</scope>
</reference>
<reference key="2">
    <citation type="journal article" date="2005" name="Science">
        <title>The transcriptional landscape of the mammalian genome.</title>
        <authorList>
            <person name="Carninci P."/>
            <person name="Kasukawa T."/>
            <person name="Katayama S."/>
            <person name="Gough J."/>
            <person name="Frith M.C."/>
            <person name="Maeda N."/>
            <person name="Oyama R."/>
            <person name="Ravasi T."/>
            <person name="Lenhard B."/>
            <person name="Wells C."/>
            <person name="Kodzius R."/>
            <person name="Shimokawa K."/>
            <person name="Bajic V.B."/>
            <person name="Brenner S.E."/>
            <person name="Batalov S."/>
            <person name="Forrest A.R."/>
            <person name="Zavolan M."/>
            <person name="Davis M.J."/>
            <person name="Wilming L.G."/>
            <person name="Aidinis V."/>
            <person name="Allen J.E."/>
            <person name="Ambesi-Impiombato A."/>
            <person name="Apweiler R."/>
            <person name="Aturaliya R.N."/>
            <person name="Bailey T.L."/>
            <person name="Bansal M."/>
            <person name="Baxter L."/>
            <person name="Beisel K.W."/>
            <person name="Bersano T."/>
            <person name="Bono H."/>
            <person name="Chalk A.M."/>
            <person name="Chiu K.P."/>
            <person name="Choudhary V."/>
            <person name="Christoffels A."/>
            <person name="Clutterbuck D.R."/>
            <person name="Crowe M.L."/>
            <person name="Dalla E."/>
            <person name="Dalrymple B.P."/>
            <person name="de Bono B."/>
            <person name="Della Gatta G."/>
            <person name="di Bernardo D."/>
            <person name="Down T."/>
            <person name="Engstrom P."/>
            <person name="Fagiolini M."/>
            <person name="Faulkner G."/>
            <person name="Fletcher C.F."/>
            <person name="Fukushima T."/>
            <person name="Furuno M."/>
            <person name="Futaki S."/>
            <person name="Gariboldi M."/>
            <person name="Georgii-Hemming P."/>
            <person name="Gingeras T.R."/>
            <person name="Gojobori T."/>
            <person name="Green R.E."/>
            <person name="Gustincich S."/>
            <person name="Harbers M."/>
            <person name="Hayashi Y."/>
            <person name="Hensch T.K."/>
            <person name="Hirokawa N."/>
            <person name="Hill D."/>
            <person name="Huminiecki L."/>
            <person name="Iacono M."/>
            <person name="Ikeo K."/>
            <person name="Iwama A."/>
            <person name="Ishikawa T."/>
            <person name="Jakt M."/>
            <person name="Kanapin A."/>
            <person name="Katoh M."/>
            <person name="Kawasawa Y."/>
            <person name="Kelso J."/>
            <person name="Kitamura H."/>
            <person name="Kitano H."/>
            <person name="Kollias G."/>
            <person name="Krishnan S.P."/>
            <person name="Kruger A."/>
            <person name="Kummerfeld S.K."/>
            <person name="Kurochkin I.V."/>
            <person name="Lareau L.F."/>
            <person name="Lazarevic D."/>
            <person name="Lipovich L."/>
            <person name="Liu J."/>
            <person name="Liuni S."/>
            <person name="McWilliam S."/>
            <person name="Madan Babu M."/>
            <person name="Madera M."/>
            <person name="Marchionni L."/>
            <person name="Matsuda H."/>
            <person name="Matsuzawa S."/>
            <person name="Miki H."/>
            <person name="Mignone F."/>
            <person name="Miyake S."/>
            <person name="Morris K."/>
            <person name="Mottagui-Tabar S."/>
            <person name="Mulder N."/>
            <person name="Nakano N."/>
            <person name="Nakauchi H."/>
            <person name="Ng P."/>
            <person name="Nilsson R."/>
            <person name="Nishiguchi S."/>
            <person name="Nishikawa S."/>
            <person name="Nori F."/>
            <person name="Ohara O."/>
            <person name="Okazaki Y."/>
            <person name="Orlando V."/>
            <person name="Pang K.C."/>
            <person name="Pavan W.J."/>
            <person name="Pavesi G."/>
            <person name="Pesole G."/>
            <person name="Petrovsky N."/>
            <person name="Piazza S."/>
            <person name="Reed J."/>
            <person name="Reid J.F."/>
            <person name="Ring B.Z."/>
            <person name="Ringwald M."/>
            <person name="Rost B."/>
            <person name="Ruan Y."/>
            <person name="Salzberg S.L."/>
            <person name="Sandelin A."/>
            <person name="Schneider C."/>
            <person name="Schoenbach C."/>
            <person name="Sekiguchi K."/>
            <person name="Semple C.A."/>
            <person name="Seno S."/>
            <person name="Sessa L."/>
            <person name="Sheng Y."/>
            <person name="Shibata Y."/>
            <person name="Shimada H."/>
            <person name="Shimada K."/>
            <person name="Silva D."/>
            <person name="Sinclair B."/>
            <person name="Sperling S."/>
            <person name="Stupka E."/>
            <person name="Sugiura K."/>
            <person name="Sultana R."/>
            <person name="Takenaka Y."/>
            <person name="Taki K."/>
            <person name="Tammoja K."/>
            <person name="Tan S.L."/>
            <person name="Tang S."/>
            <person name="Taylor M.S."/>
            <person name="Tegner J."/>
            <person name="Teichmann S.A."/>
            <person name="Ueda H.R."/>
            <person name="van Nimwegen E."/>
            <person name="Verardo R."/>
            <person name="Wei C.L."/>
            <person name="Yagi K."/>
            <person name="Yamanishi H."/>
            <person name="Zabarovsky E."/>
            <person name="Zhu S."/>
            <person name="Zimmer A."/>
            <person name="Hide W."/>
            <person name="Bult C."/>
            <person name="Grimmond S.M."/>
            <person name="Teasdale R.D."/>
            <person name="Liu E.T."/>
            <person name="Brusic V."/>
            <person name="Quackenbush J."/>
            <person name="Wahlestedt C."/>
            <person name="Mattick J.S."/>
            <person name="Hume D.A."/>
            <person name="Kai C."/>
            <person name="Sasaki D."/>
            <person name="Tomaru Y."/>
            <person name="Fukuda S."/>
            <person name="Kanamori-Katayama M."/>
            <person name="Suzuki M."/>
            <person name="Aoki J."/>
            <person name="Arakawa T."/>
            <person name="Iida J."/>
            <person name="Imamura K."/>
            <person name="Itoh M."/>
            <person name="Kato T."/>
            <person name="Kawaji H."/>
            <person name="Kawagashira N."/>
            <person name="Kawashima T."/>
            <person name="Kojima M."/>
            <person name="Kondo S."/>
            <person name="Konno H."/>
            <person name="Nakano K."/>
            <person name="Ninomiya N."/>
            <person name="Nishio T."/>
            <person name="Okada M."/>
            <person name="Plessy C."/>
            <person name="Shibata K."/>
            <person name="Shiraki T."/>
            <person name="Suzuki S."/>
            <person name="Tagami M."/>
            <person name="Waki K."/>
            <person name="Watahiki A."/>
            <person name="Okamura-Oho Y."/>
            <person name="Suzuki H."/>
            <person name="Kawai J."/>
            <person name="Hayashizaki Y."/>
        </authorList>
    </citation>
    <scope>NUCLEOTIDE SEQUENCE [LARGE SCALE MRNA] (ISOFORMS 1 AND 2)</scope>
    <source>
        <strain>C57BL/6J</strain>
        <strain>NOD</strain>
        <tissue>Eye</tissue>
        <tissue>Thymus</tissue>
        <tissue>Tongue</tissue>
    </source>
</reference>
<reference key="3">
    <citation type="journal article" date="2004" name="Genome Res.">
        <title>The status, quality, and expansion of the NIH full-length cDNA project: the Mammalian Gene Collection (MGC).</title>
        <authorList>
            <consortium name="The MGC Project Team"/>
        </authorList>
    </citation>
    <scope>NUCLEOTIDE SEQUENCE [LARGE SCALE MRNA] (ISOFORM 1)</scope>
    <source>
        <tissue>Mammary tumor</tissue>
    </source>
</reference>
<reference key="4">
    <citation type="journal article" date="1998" name="Cell">
        <title>A critical role for DNA end-joining proteins in both lymphogenesis and neurogenesis.</title>
        <authorList>
            <person name="Gao Y."/>
            <person name="Sun Y."/>
            <person name="Frank K.M."/>
            <person name="Dikkes P."/>
            <person name="Fujiwara Y."/>
            <person name="Seidl K.J."/>
            <person name="Sekiguchi J.M."/>
            <person name="Rathbun G.A."/>
            <person name="Swat W."/>
            <person name="Wang J."/>
            <person name="Bronson R.T."/>
            <person name="Malynn B.A."/>
            <person name="Bryans M."/>
            <person name="Zhu C."/>
            <person name="Chaudhuri J."/>
            <person name="Davidson L."/>
            <person name="Ferrini R."/>
            <person name="Stamato T."/>
            <person name="Orkin S.H."/>
            <person name="Greenberg M.E."/>
            <person name="Alt F.W."/>
        </authorList>
    </citation>
    <scope>FUNCTION</scope>
    <scope>DISRUPTION PHENOTYPE</scope>
</reference>
<reference key="5">
    <citation type="journal article" date="2003" name="DNA Repair">
        <title>DNA-PK phosphorylation sites in XRCC4 are not required for survival after radiation or for V(D)J recombination.</title>
        <authorList>
            <person name="Yu Y."/>
            <person name="Wang W."/>
            <person name="Ding Q."/>
            <person name="Ye R."/>
            <person name="Chen D."/>
            <person name="Merkle D."/>
            <person name="Schriemer D."/>
            <person name="Meek K."/>
            <person name="Lees-Miller S.P."/>
        </authorList>
    </citation>
    <scope>PHOSPHORYLATION AT SER-53; SER-193; SER-254; SER-295; SER-307; SER-312; THR-315; SER-319 AND SER-320</scope>
    <scope>MUTAGENESIS OF SER-53; SER-193; SER-254; SER-295; SER-307; SER-312; THR-315; SER-319 AND SER-320</scope>
</reference>
<reference key="6">
    <citation type="journal article" date="2010" name="Cell">
        <title>A tissue-specific atlas of mouse protein phosphorylation and expression.</title>
        <authorList>
            <person name="Huttlin E.L."/>
            <person name="Jedrychowski M.P."/>
            <person name="Elias J.E."/>
            <person name="Goswami T."/>
            <person name="Rad R."/>
            <person name="Beausoleil S.A."/>
            <person name="Villen J."/>
            <person name="Haas W."/>
            <person name="Sowa M.E."/>
            <person name="Gygi S.P."/>
        </authorList>
    </citation>
    <scope>PHOSPHORYLATION [LARGE SCALE ANALYSIS] AT THR-244; THR-315; SER-319 AND SER-320</scope>
    <scope>IDENTIFICATION BY MASS SPECTROMETRY [LARGE SCALE ANALYSIS]</scope>
    <source>
        <tissue>Testis</tissue>
    </source>
</reference>
<reference key="7">
    <citation type="journal article" date="2021" name="Mol. Cell">
        <title>Caspase cleavage releases a nuclear protein fragment that stimulates phospholipid scrambling at the plasma membrane.</title>
        <authorList>
            <person name="Maruoka M."/>
            <person name="Zhang P."/>
            <person name="Mori H."/>
            <person name="Imanishi E."/>
            <person name="Packwood D.M."/>
            <person name="Harada H."/>
            <person name="Kosako H."/>
            <person name="Suzuki J."/>
        </authorList>
    </citation>
    <scope>FUNCTION</scope>
</reference>
<feature type="chain" id="PRO_0000066048" description="DNA repair protein XRCC4">
    <location>
        <begin position="1"/>
        <end position="326"/>
    </location>
</feature>
<feature type="chain" id="PRO_0000453297" description="Protein XRCC4, C-terminus" evidence="1">
    <location>
        <begin position="266"/>
        <end position="326"/>
    </location>
</feature>
<feature type="region of interest" description="Interaction with IFFO1" evidence="1">
    <location>
        <begin position="1"/>
        <end position="212"/>
    </location>
</feature>
<feature type="region of interest" description="Interaction with LIG4" evidence="1">
    <location>
        <begin position="180"/>
        <end position="211"/>
    </location>
</feature>
<feature type="region of interest" description="Disordered" evidence="3">
    <location>
        <begin position="203"/>
        <end position="326"/>
    </location>
</feature>
<feature type="coiled-coil region" evidence="2">
    <location>
        <begin position="131"/>
        <end position="165"/>
    </location>
</feature>
<feature type="coiled-coil region" evidence="2">
    <location>
        <begin position="185"/>
        <end position="209"/>
    </location>
</feature>
<feature type="short sequence motif" description="Nuclear localization signal" evidence="1">
    <location>
        <begin position="264"/>
        <end position="269"/>
    </location>
</feature>
<feature type="compositionally biased region" description="Basic and acidic residues" evidence="3">
    <location>
        <begin position="206"/>
        <end position="226"/>
    </location>
</feature>
<feature type="compositionally biased region" description="Polar residues" evidence="3">
    <location>
        <begin position="307"/>
        <end position="326"/>
    </location>
</feature>
<feature type="modified residue" description="Phosphoserine; by PRKDC" evidence="11">
    <location>
        <position position="53"/>
    </location>
</feature>
<feature type="modified residue" description="Phosphoserine; by PRKDC" evidence="11">
    <location>
        <position position="193"/>
    </location>
</feature>
<feature type="modified residue" description="Phosphotyrosine" evidence="1">
    <location>
        <position position="227"/>
    </location>
</feature>
<feature type="modified residue" description="Phosphoserine" evidence="1">
    <location>
        <position position="230"/>
    </location>
</feature>
<feature type="modified residue" description="Phosphothreonine" evidence="1">
    <location>
        <position position="231"/>
    </location>
</feature>
<feature type="modified residue" description="Phosphoserine" evidence="1">
    <location>
        <position position="235"/>
    </location>
</feature>
<feature type="modified residue" description="Phosphothreonine" evidence="14">
    <location>
        <position position="244"/>
    </location>
</feature>
<feature type="modified residue" description="Phosphoserine" evidence="1">
    <location>
        <position position="250"/>
    </location>
</feature>
<feature type="modified residue" description="Phosphoserine; by PRKDC" evidence="11">
    <location>
        <position position="254"/>
    </location>
</feature>
<feature type="modified residue" description="Phosphoserine; by PRKDC" evidence="11">
    <location>
        <position position="295"/>
    </location>
</feature>
<feature type="modified residue" description="Phosphoserine" evidence="1">
    <location>
        <position position="296"/>
    </location>
</feature>
<feature type="modified residue" description="Phosphoserine; by PRKDC" evidence="11">
    <location>
        <position position="307"/>
    </location>
</feature>
<feature type="modified residue" description="Phosphoserine; by PRKDC" evidence="11">
    <location>
        <position position="312"/>
    </location>
</feature>
<feature type="modified residue" description="Phosphothreonine; by PRKDC" evidence="11 14">
    <location>
        <position position="315"/>
    </location>
</feature>
<feature type="modified residue" description="Phosphoserine; by PRKDC" evidence="11 14">
    <location>
        <position position="319"/>
    </location>
</feature>
<feature type="modified residue" description="Phosphoserine; by PRKDC" evidence="11 14">
    <location>
        <position position="320"/>
    </location>
</feature>
<feature type="cross-link" description="Glycyl lysine isopeptide (Lys-Gly) (interchain with G-Cter in ubiquitin)" evidence="1">
    <location>
        <position position="290"/>
    </location>
</feature>
<feature type="splice variant" id="VSP_009475" description="In isoform 2." evidence="8">
    <original>LASSLPQTLKEESTSAENMSLETLRNSSPEDLFD</original>
    <variation>KKKYPSIMSTKVQRSLGEGGHG</variation>
    <location>
        <begin position="293"/>
        <end position="326"/>
    </location>
</feature>
<feature type="mutagenesis site" description="In 9A mutant; abolished phosphorylation by PRKDC; does not affect ability to repair double-strand breaks (DSBs), possibly because of redundancy with NHEJ1/XLF phosphorylation sites; when associated with A-193, A-254, A-295, A-307, A-312, A-315, A-319 and A-320." evidence="4">
    <original>S</original>
    <variation>A</variation>
    <location>
        <position position="53"/>
    </location>
</feature>
<feature type="mutagenesis site" description="In 9A mutant; abolished phosphorylation by PRKDC; does not affect ability to repair double-strand breaks (DSBs), possibly because of redundancy with NHEJ1/XLF phosphorylation sites; when associated with A-53, A-254, A-295, A-307, A-312, A-315, A-319 and A-320." evidence="4">
    <original>S</original>
    <variation>A</variation>
    <location>
        <position position="193"/>
    </location>
</feature>
<feature type="mutagenesis site" description="In 9A mutant; abolished phosphorylation by PRKDC; does not affect ability to repair double-strand breaks (DSBs), possibly because of redundancy with NHEJ1/XLF phosphorylation sites; when associated with A-53, A-193, A-295, A-307, A-312, A-315, A-319 and A-320." evidence="4">
    <original>S</original>
    <variation>A</variation>
    <location>
        <position position="254"/>
    </location>
</feature>
<feature type="mutagenesis site" description="In 9A mutant; abolished phosphorylation by PRKDC; does not affect ability to repair double-strand breaks (DSBs), possibly because of redundancy with NHEJ1/XLF phosphorylation sites; when associated with A-53, A-193, A-254, A-307, A-312, A-315, A-319 and A-320." evidence="4">
    <original>S</original>
    <variation>A</variation>
    <location>
        <position position="295"/>
    </location>
</feature>
<feature type="mutagenesis site" description="In 9A mutant; abolished phosphorylation by PRKDC; does not affect ability to repair double-strand breaks (DSBs), possibly because of redundancy with NHEJ1/XLF phosphorylation sites; when associated with A-53, A-193, A-254, A-295, A-312, A-315, A-319 and A-320." evidence="4">
    <original>S</original>
    <variation>A</variation>
    <location>
        <position position="307"/>
    </location>
</feature>
<feature type="mutagenesis site" description="In 9A mutant; abolished phosphorylation by PRKDC; does not affect ability to repair double-strand breaks (DSBs), possibly because of redundancy with NHEJ1/XLF phosphorylation sites; when associated with A-53, A-193, A-254, A-295, A-307, A-315, A-319 and A-320." evidence="4">
    <original>S</original>
    <variation>A</variation>
    <location>
        <position position="312"/>
    </location>
</feature>
<feature type="mutagenesis site" description="In 9A mutant; abolished phosphorylation by PRKDC; does not affect ability to repair double-strand breaks (DSBs), possibly because of redundancy with NHEJ1/XLF phosphorylation sites; when associated with A-53, A-193, A-254, A-295, A-307, A-312, A-319 and A-320." evidence="4">
    <original>T</original>
    <variation>A</variation>
    <location>
        <position position="315"/>
    </location>
</feature>
<feature type="mutagenesis site" description="In 9A mutant; abolished phosphorylation by PRKDC; does not affect ability to repair double-strand breaks (DSBs), possibly because of redundancy with NHEJ1/XLF phosphorylation sites; when associated with A-53, A-193, A-254, A-295, A-307, A-312, A-315 and A-320." evidence="4">
    <original>S</original>
    <variation>A</variation>
    <location>
        <position position="319"/>
    </location>
</feature>
<feature type="mutagenesis site" description="In 9A mutant; abolished phosphorylation by PRKDC; does not affect ability to repair double-strand breaks (DSBs), possibly because of redundancy with NHEJ1/XLF phosphorylation sites; when associated with A-53, A-193, A-254, A-295, A-307, A-312, A-315 and A-319." evidence="4">
    <original>S</original>
    <variation>A</variation>
    <location>
        <position position="320"/>
    </location>
</feature>
<feature type="sequence conflict" description="In Ref. 3; BAB26604/BAC35447." evidence="10" ref="3">
    <original>A</original>
    <variation>T</variation>
    <location>
        <position position="27"/>
    </location>
</feature>
<feature type="sequence conflict" description="In Ref. 3; BAC40256." evidence="10" ref="3">
    <original>Q</original>
    <variation>P</variation>
    <location>
        <position position="54"/>
    </location>
</feature>
<feature type="sequence conflict" description="In Ref. 3; BAB26604/BAC35447." evidence="10" ref="3">
    <original>Q</original>
    <variation>R</variation>
    <location>
        <position position="93"/>
    </location>
</feature>
<feature type="sequence conflict" description="In Ref. 3; BAB26604/BAC35447." evidence="10" ref="3">
    <original>E</original>
    <variation>D</variation>
    <location>
        <position position="125"/>
    </location>
</feature>
<protein>
    <recommendedName>
        <fullName evidence="10">DNA repair protein XRCC4</fullName>
    </recommendedName>
    <alternativeName>
        <fullName evidence="7">X-ray repair cross-complementing protein 4</fullName>
    </alternativeName>
    <component>
        <recommendedName>
            <fullName evidence="12">Protein XRCC4, C-terminus</fullName>
            <shortName evidence="9">XRCC4/C</shortName>
        </recommendedName>
    </component>
</protein>
<proteinExistence type="evidence at protein level"/>
<evidence type="ECO:0000250" key="1">
    <source>
        <dbReference type="UniProtKB" id="Q13426"/>
    </source>
</evidence>
<evidence type="ECO:0000255" key="2"/>
<evidence type="ECO:0000256" key="3">
    <source>
        <dbReference type="SAM" id="MobiDB-lite"/>
    </source>
</evidence>
<evidence type="ECO:0000269" key="4">
    <source>
    </source>
</evidence>
<evidence type="ECO:0000269" key="5">
    <source>
    </source>
</evidence>
<evidence type="ECO:0000269" key="6">
    <source>
    </source>
</evidence>
<evidence type="ECO:0000303" key="7">
    <source>
    </source>
</evidence>
<evidence type="ECO:0000303" key="8">
    <source>
    </source>
</evidence>
<evidence type="ECO:0000303" key="9">
    <source>
    </source>
</evidence>
<evidence type="ECO:0000305" key="10"/>
<evidence type="ECO:0000305" key="11">
    <source>
    </source>
</evidence>
<evidence type="ECO:0000305" key="12">
    <source>
    </source>
</evidence>
<evidence type="ECO:0000312" key="13">
    <source>
        <dbReference type="MGI" id="MGI:1333799"/>
    </source>
</evidence>
<evidence type="ECO:0007744" key="14">
    <source>
    </source>
</evidence>
<accession>Q924T3</accession>
<accession>Q8BKC9</accession>
<accession>Q8BU02</accession>
<accession>Q9D6U6</accession>
<name>XRCC4_MOUSE</name>
<gene>
    <name evidence="7 13" type="primary">Xrcc4</name>
</gene>